<reference key="1">
    <citation type="journal article" date="2002" name="Science">
        <title>50 million years of genomic stasis in endosymbiotic bacteria.</title>
        <authorList>
            <person name="Tamas I."/>
            <person name="Klasson L."/>
            <person name="Canbaeck B."/>
            <person name="Naeslund A.K."/>
            <person name="Eriksson A.-S."/>
            <person name="Wernegreen J.J."/>
            <person name="Sandstroem J.P."/>
            <person name="Moran N.A."/>
            <person name="Andersson S.G.E."/>
        </authorList>
    </citation>
    <scope>NUCLEOTIDE SEQUENCE [LARGE SCALE GENOMIC DNA]</scope>
    <source>
        <strain>Sg</strain>
    </source>
</reference>
<feature type="chain" id="PRO_0000177932" description="DNA mismatch repair protein MutL">
    <location>
        <begin position="1"/>
        <end position="582"/>
    </location>
</feature>
<dbReference type="EMBL" id="AE013218">
    <property type="protein sequence ID" value="AAM68088.1"/>
    <property type="molecule type" value="Genomic_DNA"/>
</dbReference>
<dbReference type="RefSeq" id="WP_011054054.1">
    <property type="nucleotide sequence ID" value="NC_004061.1"/>
</dbReference>
<dbReference type="SMR" id="Q8K913"/>
<dbReference type="STRING" id="198804.BUsg_550"/>
<dbReference type="GeneID" id="93004027"/>
<dbReference type="KEGG" id="bas:BUsg_550"/>
<dbReference type="eggNOG" id="COG0323">
    <property type="taxonomic scope" value="Bacteria"/>
</dbReference>
<dbReference type="HOGENOM" id="CLU_004131_5_1_6"/>
<dbReference type="Proteomes" id="UP000000416">
    <property type="component" value="Chromosome"/>
</dbReference>
<dbReference type="GO" id="GO:0032300">
    <property type="term" value="C:mismatch repair complex"/>
    <property type="evidence" value="ECO:0007669"/>
    <property type="project" value="InterPro"/>
</dbReference>
<dbReference type="GO" id="GO:0005524">
    <property type="term" value="F:ATP binding"/>
    <property type="evidence" value="ECO:0007669"/>
    <property type="project" value="InterPro"/>
</dbReference>
<dbReference type="GO" id="GO:0016887">
    <property type="term" value="F:ATP hydrolysis activity"/>
    <property type="evidence" value="ECO:0007669"/>
    <property type="project" value="InterPro"/>
</dbReference>
<dbReference type="GO" id="GO:0140664">
    <property type="term" value="F:ATP-dependent DNA damage sensor activity"/>
    <property type="evidence" value="ECO:0007669"/>
    <property type="project" value="InterPro"/>
</dbReference>
<dbReference type="GO" id="GO:0030983">
    <property type="term" value="F:mismatched DNA binding"/>
    <property type="evidence" value="ECO:0007669"/>
    <property type="project" value="InterPro"/>
</dbReference>
<dbReference type="GO" id="GO:0006298">
    <property type="term" value="P:mismatch repair"/>
    <property type="evidence" value="ECO:0007669"/>
    <property type="project" value="UniProtKB-UniRule"/>
</dbReference>
<dbReference type="CDD" id="cd16926">
    <property type="entry name" value="HATPase_MutL-MLH-PMS-like"/>
    <property type="match status" value="1"/>
</dbReference>
<dbReference type="FunFam" id="3.30.565.10:FF:000003">
    <property type="entry name" value="DNA mismatch repair endonuclease MutL"/>
    <property type="match status" value="1"/>
</dbReference>
<dbReference type="Gene3D" id="3.30.230.10">
    <property type="match status" value="1"/>
</dbReference>
<dbReference type="Gene3D" id="3.30.565.10">
    <property type="entry name" value="Histidine kinase-like ATPase, C-terminal domain"/>
    <property type="match status" value="1"/>
</dbReference>
<dbReference type="Gene3D" id="3.30.1540.20">
    <property type="entry name" value="MutL, C-terminal domain, dimerisation subdomain"/>
    <property type="match status" value="1"/>
</dbReference>
<dbReference type="Gene3D" id="3.30.1370.100">
    <property type="entry name" value="MutL, C-terminal domain, regulatory subdomain"/>
    <property type="match status" value="1"/>
</dbReference>
<dbReference type="HAMAP" id="MF_00149">
    <property type="entry name" value="DNA_mis_repair"/>
    <property type="match status" value="1"/>
</dbReference>
<dbReference type="InterPro" id="IPR014762">
    <property type="entry name" value="DNA_mismatch_repair_CS"/>
</dbReference>
<dbReference type="InterPro" id="IPR020667">
    <property type="entry name" value="DNA_mismatch_repair_MutL"/>
</dbReference>
<dbReference type="InterPro" id="IPR013507">
    <property type="entry name" value="DNA_mismatch_S5_2-like"/>
</dbReference>
<dbReference type="InterPro" id="IPR036890">
    <property type="entry name" value="HATPase_C_sf"/>
</dbReference>
<dbReference type="InterPro" id="IPR002099">
    <property type="entry name" value="MutL/Mlh/PMS"/>
</dbReference>
<dbReference type="InterPro" id="IPR038973">
    <property type="entry name" value="MutL/Mlh/Pms-like"/>
</dbReference>
<dbReference type="InterPro" id="IPR042120">
    <property type="entry name" value="MutL_C_dimsub"/>
</dbReference>
<dbReference type="InterPro" id="IPR042121">
    <property type="entry name" value="MutL_C_regsub"/>
</dbReference>
<dbReference type="InterPro" id="IPR037198">
    <property type="entry name" value="MutL_C_sf"/>
</dbReference>
<dbReference type="InterPro" id="IPR020568">
    <property type="entry name" value="Ribosomal_Su5_D2-typ_SF"/>
</dbReference>
<dbReference type="InterPro" id="IPR014721">
    <property type="entry name" value="Ribsml_uS5_D2-typ_fold_subgr"/>
</dbReference>
<dbReference type="NCBIfam" id="TIGR00585">
    <property type="entry name" value="mutl"/>
    <property type="match status" value="1"/>
</dbReference>
<dbReference type="PANTHER" id="PTHR10073">
    <property type="entry name" value="DNA MISMATCH REPAIR PROTEIN MLH, PMS, MUTL"/>
    <property type="match status" value="1"/>
</dbReference>
<dbReference type="PANTHER" id="PTHR10073:SF12">
    <property type="entry name" value="DNA MISMATCH REPAIR PROTEIN MLH1"/>
    <property type="match status" value="1"/>
</dbReference>
<dbReference type="Pfam" id="PF01119">
    <property type="entry name" value="DNA_mis_repair"/>
    <property type="match status" value="1"/>
</dbReference>
<dbReference type="Pfam" id="PF13589">
    <property type="entry name" value="HATPase_c_3"/>
    <property type="match status" value="1"/>
</dbReference>
<dbReference type="SMART" id="SM01340">
    <property type="entry name" value="DNA_mis_repair"/>
    <property type="match status" value="1"/>
</dbReference>
<dbReference type="SUPFAM" id="SSF55874">
    <property type="entry name" value="ATPase domain of HSP90 chaperone/DNA topoisomerase II/histidine kinase"/>
    <property type="match status" value="1"/>
</dbReference>
<dbReference type="SUPFAM" id="SSF118116">
    <property type="entry name" value="DNA mismatch repair protein MutL"/>
    <property type="match status" value="1"/>
</dbReference>
<dbReference type="SUPFAM" id="SSF54211">
    <property type="entry name" value="Ribosomal protein S5 domain 2-like"/>
    <property type="match status" value="1"/>
</dbReference>
<dbReference type="PROSITE" id="PS00058">
    <property type="entry name" value="DNA_MISMATCH_REPAIR_1"/>
    <property type="match status" value="1"/>
</dbReference>
<evidence type="ECO:0000255" key="1">
    <source>
        <dbReference type="HAMAP-Rule" id="MF_00149"/>
    </source>
</evidence>
<accession>Q8K913</accession>
<keyword id="KW-0227">DNA damage</keyword>
<keyword id="KW-0234">DNA repair</keyword>
<proteinExistence type="inferred from homology"/>
<comment type="function">
    <text evidence="1">This protein is involved in the repair of mismatches in DNA. It is required for dam-dependent methyl-directed DNA mismatch repair. May act as a 'molecular matchmaker', a protein that promotes the formation of a stable complex between two or more DNA-binding proteins in an ATP-dependent manner without itself being part of a final effector complex.</text>
</comment>
<comment type="similarity">
    <text evidence="1">Belongs to the DNA mismatch repair MutL/HexB family.</text>
</comment>
<gene>
    <name evidence="1" type="primary">mutL</name>
    <name type="ordered locus">BUsg_550</name>
</gene>
<organism>
    <name type="scientific">Buchnera aphidicola subsp. Schizaphis graminum (strain Sg)</name>
    <dbReference type="NCBI Taxonomy" id="198804"/>
    <lineage>
        <taxon>Bacteria</taxon>
        <taxon>Pseudomonadati</taxon>
        <taxon>Pseudomonadota</taxon>
        <taxon>Gammaproteobacteria</taxon>
        <taxon>Enterobacterales</taxon>
        <taxon>Erwiniaceae</taxon>
        <taxon>Buchnera</taxon>
    </lineage>
</organism>
<name>MUTL_BUCAP</name>
<protein>
    <recommendedName>
        <fullName evidence="1">DNA mismatch repair protein MutL</fullName>
    </recommendedName>
</protein>
<sequence length="582" mass="67945">MQPIRMLSSSLSSQISAGEVIERPSSVIKELLENSIDAQAKNIDISVERSGLNSITVKDDGFGIEKDQLLLAISRHATSKINRLSDLDNINTFGFRGEALASIRAVSRMKLISCSQNSNIAWSIYSEGFSNHTLLQPIAHPIGTSIIVDNLFYNIPVRLKFIKNERSEFLKIDETIKKIALSNFGINIFFKKDKKLFVSYKAITKNNNKIHRLKTVFNQIDLNYVLEIKEKMHNITLFGWLIFPSSLSSTFKKIQYCYVNNRFVYNNLIKSAVFNSFYEIIGNKRSTSFILYLTLPSNEIDINIHPTKNEIKFHKSNIIYFFVYQSILSSLKKCKIKYISNNFFLKTHSNKCKNNNSDSLNTKLVSQIHSKYEKKDLYKDVISTDLFKINSQRFLKEYFFSFGKLLIVFQKYYGLMYYSNTFSLISFPLAKKIVEQYKLRSAIKNNMIPEIFSYNFLYFITFKQNKILSNNLKLLLKFGFNLILKEKYFFLKTIPIFLKNQNLDVLLSSFFSFIFFKKKIYIKDIIKWFDTTILIEKNSWNYEDGISILLEIEYFCPSIFKKPPLKLLQKINVDEVLCILKV</sequence>